<gene>
    <name evidence="7" type="primary">Agr6</name>
</gene>
<keyword id="KW-0456">Lyase</keyword>
<keyword id="KW-0460">Magnesium</keyword>
<keyword id="KW-0479">Metal-binding</keyword>
<organism>
    <name type="scientific">Cyclocybe aegerita</name>
    <name type="common">Black poplar mushroom</name>
    <name type="synonym">Agrocybe aegerita</name>
    <dbReference type="NCBI Taxonomy" id="1973307"/>
    <lineage>
        <taxon>Eukaryota</taxon>
        <taxon>Fungi</taxon>
        <taxon>Dikarya</taxon>
        <taxon>Basidiomycota</taxon>
        <taxon>Agaricomycotina</taxon>
        <taxon>Agaricomycetes</taxon>
        <taxon>Agaricomycetidae</taxon>
        <taxon>Agaricales</taxon>
        <taxon>Agaricineae</taxon>
        <taxon>Bolbitiaceae</taxon>
        <taxon>Cyclocybe</taxon>
    </lineage>
</organism>
<evidence type="ECO:0000250" key="1">
    <source>
        <dbReference type="UniProtKB" id="B5HDJ6"/>
    </source>
</evidence>
<evidence type="ECO:0000250" key="2">
    <source>
        <dbReference type="UniProtKB" id="I3ZNU9"/>
    </source>
</evidence>
<evidence type="ECO:0000250" key="3">
    <source>
        <dbReference type="UniProtKB" id="P0DL13"/>
    </source>
</evidence>
<evidence type="ECO:0000250" key="4">
    <source>
        <dbReference type="UniProtKB" id="Q9UR08"/>
    </source>
</evidence>
<evidence type="ECO:0000256" key="5">
    <source>
        <dbReference type="SAM" id="MobiDB-lite"/>
    </source>
</evidence>
<evidence type="ECO:0000269" key="6">
    <source>
    </source>
</evidence>
<evidence type="ECO:0000303" key="7">
    <source>
    </source>
</evidence>
<protein>
    <recommendedName>
        <fullName evidence="7">Delta(6)-protoilludene synthase</fullName>
        <ecNumber evidence="6">4.2.3.135</ecNumber>
    </recommendedName>
    <alternativeName>
        <fullName evidence="7">Terpene cyclase Agr6</fullName>
    </alternativeName>
</protein>
<sequence>MPGSANWTADRFYIPDTLANWPWPRAINPAYEECKAASAAWCEKYGAFSARAQKAFNLCDFNLLASLAYAGLPADVNRVGCDLMNLFFVVDEHTDAMDARSVQDWVDIVVDALHHPHTPRPAGEPKVGEIARTFWENGIKCMGPTAQRRFVETFTTYLQSVVTQAQDRDKHLFRDVDSYMEVRRDTIGAKPSFALLEHDMELPDDVFYHPLLEKLREWAIDMLILGNDLCSYNVEQSRGDDGHNIIRLAMLQENTNVHGALRFVSKMHDDLAEKFLSNYQGMPSFTPQIDAWVTRYIDGLGNWVRANDSWSFESWRYFKGDVLRVQAERWVELLPPAPKDELTSSIPPESRWIKPAVEPSRARPNNVGIVALDTYTPTSEDDFQTLAVKTVSSLLSKYNINPVSVGRLDICIERAADPYIIYALRDAFASAGNTDVEAIVSSSKSVVGLFNAINWVESSSWDGRYAIVFAGDLSSGVSAALVGPDAPIVVEPTRGTYLGDPIASTDEAQGSYIDSLFQSYSHYRKKHPQFSKTSGAPNGAHTPTTTNGSIKSNGFVSGDTNGHANGNGHVQTRSSTPSSSSSSTSSPSFDYMILHDRHGKIPTGAGSIYLGLASLITDIAPETLAGKSIGVFGFANSTSTFFGIRVAGDCSVICKQLQA</sequence>
<proteinExistence type="evidence at protein level"/>
<name>AGR6_CYCAE</name>
<dbReference type="EC" id="4.2.3.135" evidence="6"/>
<dbReference type="EMBL" id="MN146029">
    <property type="protein sequence ID" value="QGA30882.1"/>
    <property type="molecule type" value="Genomic_DNA"/>
</dbReference>
<dbReference type="SMR" id="A0A5Q0QN66"/>
<dbReference type="OrthoDB" id="6486656at2759"/>
<dbReference type="GO" id="GO:0016746">
    <property type="term" value="F:acyltransferase activity"/>
    <property type="evidence" value="ECO:0007669"/>
    <property type="project" value="InterPro"/>
</dbReference>
<dbReference type="GO" id="GO:0046872">
    <property type="term" value="F:metal ion binding"/>
    <property type="evidence" value="ECO:0007669"/>
    <property type="project" value="UniProtKB-KW"/>
</dbReference>
<dbReference type="GO" id="GO:0010333">
    <property type="term" value="F:terpene synthase activity"/>
    <property type="evidence" value="ECO:0007669"/>
    <property type="project" value="InterPro"/>
</dbReference>
<dbReference type="GO" id="GO:0008299">
    <property type="term" value="P:isoprenoid biosynthetic process"/>
    <property type="evidence" value="ECO:0007669"/>
    <property type="project" value="UniProtKB-ARBA"/>
</dbReference>
<dbReference type="Gene3D" id="3.40.47.10">
    <property type="match status" value="1"/>
</dbReference>
<dbReference type="Gene3D" id="1.10.600.10">
    <property type="entry name" value="Farnesyl Diphosphate Synthase"/>
    <property type="match status" value="1"/>
</dbReference>
<dbReference type="InterPro" id="IPR013528">
    <property type="entry name" value="HMG_CoA_synth_N"/>
</dbReference>
<dbReference type="InterPro" id="IPR008949">
    <property type="entry name" value="Isoprenoid_synthase_dom_sf"/>
</dbReference>
<dbReference type="InterPro" id="IPR034686">
    <property type="entry name" value="Terpene_cyclase-like_2"/>
</dbReference>
<dbReference type="InterPro" id="IPR016039">
    <property type="entry name" value="Thiolase-like"/>
</dbReference>
<dbReference type="PANTHER" id="PTHR35201:SF4">
    <property type="entry name" value="BETA-PINACENE SYNTHASE-RELATED"/>
    <property type="match status" value="1"/>
</dbReference>
<dbReference type="PANTHER" id="PTHR35201">
    <property type="entry name" value="TERPENE SYNTHASE"/>
    <property type="match status" value="1"/>
</dbReference>
<dbReference type="Pfam" id="PF01154">
    <property type="entry name" value="HMG_CoA_synt_N"/>
    <property type="match status" value="1"/>
</dbReference>
<dbReference type="Pfam" id="PF19086">
    <property type="entry name" value="Terpene_syn_C_2"/>
    <property type="match status" value="1"/>
</dbReference>
<dbReference type="SFLD" id="SFLDS00005">
    <property type="entry name" value="Isoprenoid_Synthase_Type_I"/>
    <property type="match status" value="1"/>
</dbReference>
<dbReference type="SFLD" id="SFLDG01020">
    <property type="entry name" value="Terpene_Cyclase_Like_2"/>
    <property type="match status" value="1"/>
</dbReference>
<dbReference type="SUPFAM" id="SSF48576">
    <property type="entry name" value="Terpenoid synthases"/>
    <property type="match status" value="1"/>
</dbReference>
<feature type="chain" id="PRO_0000451260" description="Delta(6)-protoilludene synthase">
    <location>
        <begin position="1"/>
        <end position="659"/>
    </location>
</feature>
<feature type="region of interest" description="Disordered" evidence="5">
    <location>
        <begin position="528"/>
        <end position="586"/>
    </location>
</feature>
<feature type="short sequence motif" description="DDXXD motif" evidence="3">
    <location>
        <begin position="91"/>
        <end position="95"/>
    </location>
</feature>
<feature type="compositionally biased region" description="Polar residues" evidence="5">
    <location>
        <begin position="530"/>
        <end position="573"/>
    </location>
</feature>
<feature type="compositionally biased region" description="Low complexity" evidence="5">
    <location>
        <begin position="574"/>
        <end position="586"/>
    </location>
</feature>
<feature type="binding site" evidence="4">
    <location>
        <position position="91"/>
    </location>
    <ligand>
        <name>Mg(2+)</name>
        <dbReference type="ChEBI" id="CHEBI:18420"/>
        <label>1</label>
    </ligand>
</feature>
<feature type="binding site" evidence="4">
    <location>
        <position position="91"/>
    </location>
    <ligand>
        <name>Mg(2+)</name>
        <dbReference type="ChEBI" id="CHEBI:18420"/>
        <label>2</label>
    </ligand>
</feature>
<feature type="binding site" evidence="4">
    <location>
        <position position="227"/>
    </location>
    <ligand>
        <name>Mg(2+)</name>
        <dbReference type="ChEBI" id="CHEBI:18420"/>
        <label>3</label>
    </ligand>
</feature>
<feature type="binding site" evidence="4">
    <location>
        <position position="231"/>
    </location>
    <ligand>
        <name>Mg(2+)</name>
        <dbReference type="ChEBI" id="CHEBI:18420"/>
        <label>3</label>
    </ligand>
</feature>
<feature type="binding site" evidence="4">
    <location>
        <position position="235"/>
    </location>
    <ligand>
        <name>Mg(2+)</name>
        <dbReference type="ChEBI" id="CHEBI:18420"/>
        <label>3</label>
    </ligand>
</feature>
<feature type="binding site" evidence="4">
    <location>
        <position position="316"/>
    </location>
    <ligand>
        <name>(2E,6E)-farnesyl diphosphate</name>
        <dbReference type="ChEBI" id="CHEBI:175763"/>
    </ligand>
</feature>
<feature type="binding site" evidence="4">
    <location>
        <position position="317"/>
    </location>
    <ligand>
        <name>(2E,6E)-farnesyl diphosphate</name>
        <dbReference type="ChEBI" id="CHEBI:175763"/>
    </ligand>
</feature>
<feature type="site" description="Plays a critical role in the stabilization of intermediate cation" evidence="1">
    <location>
        <position position="88"/>
    </location>
</feature>
<reference key="1">
    <citation type="journal article" date="2020" name="ACS Chem. Biol.">
        <title>Agrocybe aegerita serves as a gateway for identifying sesquiterpene biosynthetic enzymes in higher fungi.</title>
        <authorList>
            <person name="Zhang C."/>
            <person name="Chen X."/>
            <person name="Orban A."/>
            <person name="Shukal S."/>
            <person name="Birk F."/>
            <person name="Too H.P."/>
            <person name="Ruehl M."/>
        </authorList>
    </citation>
    <scope>NUCLEOTIDE SEQUENCE [GENOMIC DNA]</scope>
    <scope>FUNCTION</scope>
    <scope>DOMAIN</scope>
    <scope>CATALYTIC ACTIVITY</scope>
    <source>
        <strain>AAE3_05024</strain>
    </source>
</reference>
<reference key="2">
    <citation type="journal article" date="2018" name="BMC Genomics">
        <title>The genome sequence of the commercially cultivated mushroom Agrocybe aegerita reveals a conserved repertoire of fruiting-related genes and a versatile suite of biopolymer-degrading enzymes.</title>
        <authorList>
            <person name="Gupta D.K."/>
            <person name="Ruehl M."/>
            <person name="Mishra B."/>
            <person name="Kleofas V."/>
            <person name="Hofrichter M."/>
            <person name="Herzog R."/>
            <person name="Pecyna M.J."/>
            <person name="Sharma R."/>
            <person name="Kellner H."/>
            <person name="Hennicke F."/>
            <person name="Thines M."/>
        </authorList>
    </citation>
    <scope>NUCLEOTIDE SEQUENCE [LARGE SCALE GENOMIC DNA]</scope>
    <source>
        <strain>AAE3_05024</strain>
    </source>
</reference>
<comment type="function">
    <text evidence="6">Terpene cyclase that catalyzes the cyclization of farnesyl diphosphate (FPP) to delta(6)-protoilludene.</text>
</comment>
<comment type="catalytic activity">
    <reaction evidence="6">
        <text>(2E,6E)-farnesyl diphosphate = Delta(6)-protoilludene + diphosphate</text>
        <dbReference type="Rhea" id="RHEA:34695"/>
        <dbReference type="ChEBI" id="CHEBI:33019"/>
        <dbReference type="ChEBI" id="CHEBI:68655"/>
        <dbReference type="ChEBI" id="CHEBI:175763"/>
        <dbReference type="EC" id="4.2.3.135"/>
    </reaction>
    <physiologicalReaction direction="left-to-right" evidence="6">
        <dbReference type="Rhea" id="RHEA:34696"/>
    </physiologicalReaction>
</comment>
<comment type="cofactor">
    <cofactor evidence="2">
        <name>Mg(2+)</name>
        <dbReference type="ChEBI" id="CHEBI:18420"/>
    </cofactor>
</comment>
<comment type="domain">
    <text evidence="6">The DDXXD motif is important for the catalytic activity, presumably through binding to Mg(2+).</text>
</comment>
<comment type="similarity">
    <text evidence="2">Belongs to the terpene synthase family.</text>
</comment>
<accession>A0A5Q0QN66</accession>